<evidence type="ECO:0000255" key="1">
    <source>
        <dbReference type="HAMAP-Rule" id="MF_01037"/>
    </source>
</evidence>
<feature type="chain" id="PRO_0000346406" description="Methylenetetrahydrofolate--tRNA-(uracil-5-)-methyltransferase TrmFO">
    <location>
        <begin position="1"/>
        <end position="456"/>
    </location>
</feature>
<feature type="binding site" evidence="1">
    <location>
        <begin position="11"/>
        <end position="16"/>
    </location>
    <ligand>
        <name>FAD</name>
        <dbReference type="ChEBI" id="CHEBI:57692"/>
    </ligand>
</feature>
<protein>
    <recommendedName>
        <fullName evidence="1">Methylenetetrahydrofolate--tRNA-(uracil-5-)-methyltransferase TrmFO</fullName>
        <ecNumber evidence="1">2.1.1.74</ecNumber>
    </recommendedName>
    <alternativeName>
        <fullName evidence="1">Folate-dependent tRNA (uracil-5-)-methyltransferase</fullName>
    </alternativeName>
    <alternativeName>
        <fullName evidence="1">Folate-dependent tRNA(M-5-U54)-methyltransferase</fullName>
    </alternativeName>
</protein>
<proteinExistence type="inferred from homology"/>
<name>TRMFO_SYNSC</name>
<comment type="function">
    <text evidence="1">Catalyzes the folate-dependent formation of 5-methyl-uridine at position 54 (M-5-U54) in all tRNAs.</text>
</comment>
<comment type="catalytic activity">
    <reaction evidence="1">
        <text>uridine(54) in tRNA + (6R)-5,10-methylene-5,6,7,8-tetrahydrofolate + NADH + H(+) = 5-methyluridine(54) in tRNA + (6S)-5,6,7,8-tetrahydrofolate + NAD(+)</text>
        <dbReference type="Rhea" id="RHEA:16873"/>
        <dbReference type="Rhea" id="RHEA-COMP:10167"/>
        <dbReference type="Rhea" id="RHEA-COMP:10193"/>
        <dbReference type="ChEBI" id="CHEBI:15378"/>
        <dbReference type="ChEBI" id="CHEBI:15636"/>
        <dbReference type="ChEBI" id="CHEBI:57453"/>
        <dbReference type="ChEBI" id="CHEBI:57540"/>
        <dbReference type="ChEBI" id="CHEBI:57945"/>
        <dbReference type="ChEBI" id="CHEBI:65315"/>
        <dbReference type="ChEBI" id="CHEBI:74447"/>
        <dbReference type="EC" id="2.1.1.74"/>
    </reaction>
</comment>
<comment type="catalytic activity">
    <reaction evidence="1">
        <text>uridine(54) in tRNA + (6R)-5,10-methylene-5,6,7,8-tetrahydrofolate + NADPH + H(+) = 5-methyluridine(54) in tRNA + (6S)-5,6,7,8-tetrahydrofolate + NADP(+)</text>
        <dbReference type="Rhea" id="RHEA:62372"/>
        <dbReference type="Rhea" id="RHEA-COMP:10167"/>
        <dbReference type="Rhea" id="RHEA-COMP:10193"/>
        <dbReference type="ChEBI" id="CHEBI:15378"/>
        <dbReference type="ChEBI" id="CHEBI:15636"/>
        <dbReference type="ChEBI" id="CHEBI:57453"/>
        <dbReference type="ChEBI" id="CHEBI:57783"/>
        <dbReference type="ChEBI" id="CHEBI:58349"/>
        <dbReference type="ChEBI" id="CHEBI:65315"/>
        <dbReference type="ChEBI" id="CHEBI:74447"/>
        <dbReference type="EC" id="2.1.1.74"/>
    </reaction>
</comment>
<comment type="cofactor">
    <cofactor evidence="1">
        <name>FAD</name>
        <dbReference type="ChEBI" id="CHEBI:57692"/>
    </cofactor>
</comment>
<comment type="subcellular location">
    <subcellularLocation>
        <location evidence="1">Cytoplasm</location>
    </subcellularLocation>
</comment>
<comment type="similarity">
    <text evidence="1">Belongs to the MnmG family. TrmFO subfamily.</text>
</comment>
<reference key="1">
    <citation type="submission" date="2005-07" db="EMBL/GenBank/DDBJ databases">
        <title>Complete sequence of Synechococcus sp. CC9605.</title>
        <authorList>
            <consortium name="US DOE Joint Genome Institute"/>
            <person name="Copeland A."/>
            <person name="Lucas S."/>
            <person name="Lapidus A."/>
            <person name="Barry K."/>
            <person name="Detter J.C."/>
            <person name="Glavina T."/>
            <person name="Hammon N."/>
            <person name="Israni S."/>
            <person name="Pitluck S."/>
            <person name="Schmutz J."/>
            <person name="Martinez M."/>
            <person name="Larimer F."/>
            <person name="Land M."/>
            <person name="Kyrpides N."/>
            <person name="Ivanova N."/>
            <person name="Richardson P."/>
        </authorList>
    </citation>
    <scope>NUCLEOTIDE SEQUENCE [LARGE SCALE GENOMIC DNA]</scope>
    <source>
        <strain>CC9605</strain>
    </source>
</reference>
<gene>
    <name evidence="1" type="primary">trmFO</name>
    <name type="ordered locus">Syncc9605_1686</name>
</gene>
<dbReference type="EC" id="2.1.1.74" evidence="1"/>
<dbReference type="EMBL" id="CP000110">
    <property type="protein sequence ID" value="ABB35435.1"/>
    <property type="molecule type" value="Genomic_DNA"/>
</dbReference>
<dbReference type="RefSeq" id="WP_011364646.1">
    <property type="nucleotide sequence ID" value="NC_007516.1"/>
</dbReference>
<dbReference type="SMR" id="Q3AIZ7"/>
<dbReference type="STRING" id="110662.Syncc9605_1686"/>
<dbReference type="KEGG" id="syd:Syncc9605_1686"/>
<dbReference type="eggNOG" id="COG1206">
    <property type="taxonomic scope" value="Bacteria"/>
</dbReference>
<dbReference type="HOGENOM" id="CLU_033057_1_0_3"/>
<dbReference type="OrthoDB" id="9803114at2"/>
<dbReference type="GO" id="GO:0005829">
    <property type="term" value="C:cytosol"/>
    <property type="evidence" value="ECO:0007669"/>
    <property type="project" value="TreeGrafter"/>
</dbReference>
<dbReference type="GO" id="GO:0050660">
    <property type="term" value="F:flavin adenine dinucleotide binding"/>
    <property type="evidence" value="ECO:0007669"/>
    <property type="project" value="UniProtKB-UniRule"/>
</dbReference>
<dbReference type="GO" id="GO:0047151">
    <property type="term" value="F:tRNA (uracil(54)-C5)-methyltransferase activity, 5,10-methylenetetrahydrofolate-dependent"/>
    <property type="evidence" value="ECO:0007669"/>
    <property type="project" value="UniProtKB-UniRule"/>
</dbReference>
<dbReference type="GO" id="GO:0030488">
    <property type="term" value="P:tRNA methylation"/>
    <property type="evidence" value="ECO:0007669"/>
    <property type="project" value="TreeGrafter"/>
</dbReference>
<dbReference type="GO" id="GO:0002098">
    <property type="term" value="P:tRNA wobble uridine modification"/>
    <property type="evidence" value="ECO:0007669"/>
    <property type="project" value="TreeGrafter"/>
</dbReference>
<dbReference type="Gene3D" id="3.50.50.60">
    <property type="entry name" value="FAD/NAD(P)-binding domain"/>
    <property type="match status" value="2"/>
</dbReference>
<dbReference type="HAMAP" id="MF_01037">
    <property type="entry name" value="TrmFO"/>
    <property type="match status" value="1"/>
</dbReference>
<dbReference type="InterPro" id="IPR036188">
    <property type="entry name" value="FAD/NAD-bd_sf"/>
</dbReference>
<dbReference type="InterPro" id="IPR002218">
    <property type="entry name" value="MnmG-rel"/>
</dbReference>
<dbReference type="InterPro" id="IPR040131">
    <property type="entry name" value="MnmG_N"/>
</dbReference>
<dbReference type="InterPro" id="IPR004417">
    <property type="entry name" value="TrmFO"/>
</dbReference>
<dbReference type="NCBIfam" id="TIGR00137">
    <property type="entry name" value="gid_trmFO"/>
    <property type="match status" value="1"/>
</dbReference>
<dbReference type="NCBIfam" id="NF003739">
    <property type="entry name" value="PRK05335.1"/>
    <property type="match status" value="1"/>
</dbReference>
<dbReference type="PANTHER" id="PTHR11806">
    <property type="entry name" value="GLUCOSE INHIBITED DIVISION PROTEIN A"/>
    <property type="match status" value="1"/>
</dbReference>
<dbReference type="PANTHER" id="PTHR11806:SF2">
    <property type="entry name" value="METHYLENETETRAHYDROFOLATE--TRNA-(URACIL-5-)-METHYLTRANSFERASE TRMFO"/>
    <property type="match status" value="1"/>
</dbReference>
<dbReference type="Pfam" id="PF01134">
    <property type="entry name" value="GIDA"/>
    <property type="match status" value="1"/>
</dbReference>
<dbReference type="SUPFAM" id="SSF51905">
    <property type="entry name" value="FAD/NAD(P)-binding domain"/>
    <property type="match status" value="1"/>
</dbReference>
<accession>Q3AIZ7</accession>
<sequence>MSQSPHVTVLGAGLAGTEAAWQVARAGVAVTLVEMRPIRRSPAHHSSDFAELVCSNSFGALSSDRAAGLLQEELRRLGSLVIGTADTHAVPAGGALAVDRGRYSAALTEALDQHPLVTIERREQQNLPPENAITVLATGPLTSEPLAEDLRQFTGRADCHFFDAASPIVHGDSIDLSVAFRASRYDKGDADYINCPMDKEQYLAFRQALLEAEQAELKDFDKNDATFFEGCLPIEELARRGEDTMRYGPLKPIGLWDPRWGDVNDRDVRRAKRAYAVVQLRQEDKDGRLWNLVGFQTNLKWGEQKRVLQMIPGLGQAEFVRFGVMHRNTFLESPQLLQPTLQFRQRPNLLAAGQITGTEGYAAAVAGGWLAGTNAARLALGLEPIDLPATCMSGALTHFVSEAPTAKFQPMPPNFGLLPDLPERIRDKRARYGAYRDRALQDLEPMRALQPETVTA</sequence>
<organism>
    <name type="scientific">Synechococcus sp. (strain CC9605)</name>
    <dbReference type="NCBI Taxonomy" id="110662"/>
    <lineage>
        <taxon>Bacteria</taxon>
        <taxon>Bacillati</taxon>
        <taxon>Cyanobacteriota</taxon>
        <taxon>Cyanophyceae</taxon>
        <taxon>Synechococcales</taxon>
        <taxon>Synechococcaceae</taxon>
        <taxon>Synechococcus</taxon>
    </lineage>
</organism>
<keyword id="KW-0963">Cytoplasm</keyword>
<keyword id="KW-0274">FAD</keyword>
<keyword id="KW-0285">Flavoprotein</keyword>
<keyword id="KW-0489">Methyltransferase</keyword>
<keyword id="KW-0520">NAD</keyword>
<keyword id="KW-0521">NADP</keyword>
<keyword id="KW-0808">Transferase</keyword>
<keyword id="KW-0819">tRNA processing</keyword>